<proteinExistence type="inferred from homology"/>
<protein>
    <recommendedName>
        <fullName evidence="1">S-adenosylmethionine:tRNA ribosyltransferase-isomerase</fullName>
        <ecNumber evidence="1">2.4.99.17</ecNumber>
    </recommendedName>
    <alternativeName>
        <fullName evidence="1">Queuosine biosynthesis protein QueA</fullName>
    </alternativeName>
</protein>
<keyword id="KW-0963">Cytoplasm</keyword>
<keyword id="KW-0671">Queuosine biosynthesis</keyword>
<keyword id="KW-0949">S-adenosyl-L-methionine</keyword>
<keyword id="KW-0808">Transferase</keyword>
<reference key="1">
    <citation type="journal article" date="2004" name="Nat. Genet.">
        <title>Evidence in the Legionella pneumophila genome for exploitation of host cell functions and high genome plasticity.</title>
        <authorList>
            <person name="Cazalet C."/>
            <person name="Rusniok C."/>
            <person name="Brueggemann H."/>
            <person name="Zidane N."/>
            <person name="Magnier A."/>
            <person name="Ma L."/>
            <person name="Tichit M."/>
            <person name="Jarraud S."/>
            <person name="Bouchier C."/>
            <person name="Vandenesch F."/>
            <person name="Kunst F."/>
            <person name="Etienne J."/>
            <person name="Glaser P."/>
            <person name="Buchrieser C."/>
        </authorList>
    </citation>
    <scope>NUCLEOTIDE SEQUENCE [LARGE SCALE GENOMIC DNA]</scope>
    <source>
        <strain>Lens</strain>
    </source>
</reference>
<name>QUEA_LEGPL</name>
<accession>Q5WV37</accession>
<evidence type="ECO:0000255" key="1">
    <source>
        <dbReference type="HAMAP-Rule" id="MF_00113"/>
    </source>
</evidence>
<organism>
    <name type="scientific">Legionella pneumophila (strain Lens)</name>
    <dbReference type="NCBI Taxonomy" id="297245"/>
    <lineage>
        <taxon>Bacteria</taxon>
        <taxon>Pseudomonadati</taxon>
        <taxon>Pseudomonadota</taxon>
        <taxon>Gammaproteobacteria</taxon>
        <taxon>Legionellales</taxon>
        <taxon>Legionellaceae</taxon>
        <taxon>Legionella</taxon>
    </lineage>
</organism>
<feature type="chain" id="PRO_0000231345" description="S-adenosylmethionine:tRNA ribosyltransferase-isomerase">
    <location>
        <begin position="1"/>
        <end position="337"/>
    </location>
</feature>
<dbReference type="EC" id="2.4.99.17" evidence="1"/>
<dbReference type="EMBL" id="CR628337">
    <property type="protein sequence ID" value="CAH16220.1"/>
    <property type="molecule type" value="Genomic_DNA"/>
</dbReference>
<dbReference type="RefSeq" id="WP_011215967.1">
    <property type="nucleotide sequence ID" value="NC_006369.1"/>
</dbReference>
<dbReference type="SMR" id="Q5WV37"/>
<dbReference type="KEGG" id="lpf:lpl1980"/>
<dbReference type="LegioList" id="lpl1980"/>
<dbReference type="HOGENOM" id="CLU_039110_1_0_6"/>
<dbReference type="UniPathway" id="UPA00392"/>
<dbReference type="Proteomes" id="UP000002517">
    <property type="component" value="Chromosome"/>
</dbReference>
<dbReference type="GO" id="GO:0005737">
    <property type="term" value="C:cytoplasm"/>
    <property type="evidence" value="ECO:0007669"/>
    <property type="project" value="UniProtKB-SubCell"/>
</dbReference>
<dbReference type="GO" id="GO:0051075">
    <property type="term" value="F:S-adenosylmethionine:tRNA ribosyltransferase-isomerase activity"/>
    <property type="evidence" value="ECO:0007669"/>
    <property type="project" value="UniProtKB-EC"/>
</dbReference>
<dbReference type="GO" id="GO:0008616">
    <property type="term" value="P:queuosine biosynthetic process"/>
    <property type="evidence" value="ECO:0007669"/>
    <property type="project" value="UniProtKB-UniRule"/>
</dbReference>
<dbReference type="GO" id="GO:0002099">
    <property type="term" value="P:tRNA wobble guanine modification"/>
    <property type="evidence" value="ECO:0007669"/>
    <property type="project" value="TreeGrafter"/>
</dbReference>
<dbReference type="FunFam" id="3.40.1780.10:FF:000001">
    <property type="entry name" value="S-adenosylmethionine:tRNA ribosyltransferase-isomerase"/>
    <property type="match status" value="1"/>
</dbReference>
<dbReference type="Gene3D" id="2.40.10.240">
    <property type="entry name" value="QueA-like"/>
    <property type="match status" value="1"/>
</dbReference>
<dbReference type="Gene3D" id="3.40.1780.10">
    <property type="entry name" value="QueA-like"/>
    <property type="match status" value="1"/>
</dbReference>
<dbReference type="HAMAP" id="MF_00113">
    <property type="entry name" value="QueA"/>
    <property type="match status" value="1"/>
</dbReference>
<dbReference type="InterPro" id="IPR003699">
    <property type="entry name" value="QueA"/>
</dbReference>
<dbReference type="InterPro" id="IPR042118">
    <property type="entry name" value="QueA_dom1"/>
</dbReference>
<dbReference type="InterPro" id="IPR042119">
    <property type="entry name" value="QueA_dom2"/>
</dbReference>
<dbReference type="InterPro" id="IPR036100">
    <property type="entry name" value="QueA_sf"/>
</dbReference>
<dbReference type="NCBIfam" id="NF001140">
    <property type="entry name" value="PRK00147.1"/>
    <property type="match status" value="1"/>
</dbReference>
<dbReference type="NCBIfam" id="TIGR00113">
    <property type="entry name" value="queA"/>
    <property type="match status" value="1"/>
</dbReference>
<dbReference type="PANTHER" id="PTHR30307">
    <property type="entry name" value="S-ADENOSYLMETHIONINE:TRNA RIBOSYLTRANSFERASE-ISOMERASE"/>
    <property type="match status" value="1"/>
</dbReference>
<dbReference type="PANTHER" id="PTHR30307:SF0">
    <property type="entry name" value="S-ADENOSYLMETHIONINE:TRNA RIBOSYLTRANSFERASE-ISOMERASE"/>
    <property type="match status" value="1"/>
</dbReference>
<dbReference type="Pfam" id="PF02547">
    <property type="entry name" value="Queuosine_synth"/>
    <property type="match status" value="1"/>
</dbReference>
<dbReference type="SUPFAM" id="SSF111337">
    <property type="entry name" value="QueA-like"/>
    <property type="match status" value="1"/>
</dbReference>
<gene>
    <name evidence="1" type="primary">queA</name>
    <name type="ordered locus">lpl1980</name>
</gene>
<comment type="function">
    <text evidence="1">Transfers and isomerizes the ribose moiety from AdoMet to the 7-aminomethyl group of 7-deazaguanine (preQ1-tRNA) to give epoxyqueuosine (oQ-tRNA).</text>
</comment>
<comment type="catalytic activity">
    <reaction evidence="1">
        <text>7-aminomethyl-7-carbaguanosine(34) in tRNA + S-adenosyl-L-methionine = epoxyqueuosine(34) in tRNA + adenine + L-methionine + 2 H(+)</text>
        <dbReference type="Rhea" id="RHEA:32155"/>
        <dbReference type="Rhea" id="RHEA-COMP:10342"/>
        <dbReference type="Rhea" id="RHEA-COMP:18582"/>
        <dbReference type="ChEBI" id="CHEBI:15378"/>
        <dbReference type="ChEBI" id="CHEBI:16708"/>
        <dbReference type="ChEBI" id="CHEBI:57844"/>
        <dbReference type="ChEBI" id="CHEBI:59789"/>
        <dbReference type="ChEBI" id="CHEBI:82833"/>
        <dbReference type="ChEBI" id="CHEBI:194443"/>
        <dbReference type="EC" id="2.4.99.17"/>
    </reaction>
</comment>
<comment type="pathway">
    <text evidence="1">tRNA modification; tRNA-queuosine biosynthesis.</text>
</comment>
<comment type="subunit">
    <text evidence="1">Monomer.</text>
</comment>
<comment type="subcellular location">
    <subcellularLocation>
        <location evidence="1">Cytoplasm</location>
    </subcellularLocation>
</comment>
<comment type="similarity">
    <text evidence="1">Belongs to the QueA family.</text>
</comment>
<sequence>MNKQDFYFDLPSELIAQYPLANRSDSRLLIYNRQTEEYGHYQFREIADFLQPGDLLVMNDSKVIPARLYGHKATGGKVELLVERITGDFTFLAHIKASKSLKSNDLIYLDAGKRLEVLQRQDDLFLCKASENILDLLNDLGHIPLPPYIDREDESLDKERYQTVYAKCAGSVAAPTAGLHFDEAVLSSIRARGVNIAYITLHVGAGTFRPVRCERIQDHKMHSEWFTVSPDLCTAVKAAKSMGNRVIAVGTTALRSLESAAMGGELIPCSRDTDIFIYPGYQFKVCDGLITNFHLPESTLVMLVSAFIGHQECMALYQEAIDKRYRFFSYGDASLLL</sequence>